<gene>
    <name evidence="1" type="primary">msbA</name>
    <name type="ordered locus">BURPS1710b_1357</name>
</gene>
<organism>
    <name type="scientific">Burkholderia pseudomallei (strain 1710b)</name>
    <dbReference type="NCBI Taxonomy" id="320372"/>
    <lineage>
        <taxon>Bacteria</taxon>
        <taxon>Pseudomonadati</taxon>
        <taxon>Pseudomonadota</taxon>
        <taxon>Betaproteobacteria</taxon>
        <taxon>Burkholderiales</taxon>
        <taxon>Burkholderiaceae</taxon>
        <taxon>Burkholderia</taxon>
        <taxon>pseudomallei group</taxon>
    </lineage>
</organism>
<feature type="chain" id="PRO_0000271617" description="ATP-dependent lipid A-core flippase">
    <location>
        <begin position="1"/>
        <end position="596"/>
    </location>
</feature>
<feature type="transmembrane region" description="Helical" evidence="1">
    <location>
        <begin position="34"/>
        <end position="54"/>
    </location>
</feature>
<feature type="transmembrane region" description="Helical" evidence="1">
    <location>
        <begin position="80"/>
        <end position="100"/>
    </location>
</feature>
<feature type="transmembrane region" description="Helical" evidence="1">
    <location>
        <begin position="138"/>
        <end position="158"/>
    </location>
</feature>
<feature type="transmembrane region" description="Helical" evidence="1">
    <location>
        <begin position="164"/>
        <end position="184"/>
    </location>
</feature>
<feature type="transmembrane region" description="Helical" evidence="1">
    <location>
        <begin position="263"/>
        <end position="283"/>
    </location>
</feature>
<feature type="transmembrane region" description="Helical" evidence="1">
    <location>
        <begin position="292"/>
        <end position="312"/>
    </location>
</feature>
<feature type="domain" description="ABC transmembrane type-1" evidence="1">
    <location>
        <begin position="38"/>
        <end position="321"/>
    </location>
</feature>
<feature type="domain" description="ABC transporter" evidence="1">
    <location>
        <begin position="353"/>
        <end position="589"/>
    </location>
</feature>
<feature type="binding site" evidence="1">
    <location>
        <begin position="389"/>
        <end position="396"/>
    </location>
    <ligand>
        <name>ATP</name>
        <dbReference type="ChEBI" id="CHEBI:30616"/>
    </ligand>
</feature>
<proteinExistence type="inferred from homology"/>
<keyword id="KW-0067">ATP-binding</keyword>
<keyword id="KW-0997">Cell inner membrane</keyword>
<keyword id="KW-1003">Cell membrane</keyword>
<keyword id="KW-0445">Lipid transport</keyword>
<keyword id="KW-0472">Membrane</keyword>
<keyword id="KW-0547">Nucleotide-binding</keyword>
<keyword id="KW-1278">Translocase</keyword>
<keyword id="KW-0812">Transmembrane</keyword>
<keyword id="KW-1133">Transmembrane helix</keyword>
<keyword id="KW-0813">Transport</keyword>
<sequence>MSVKPTLSKPIGGQDASSPAVVMRRLWPYVKPLVWVLVAGVLAMAAVAATEAGIPALLKPLLDHGFGSKGDMTTKLYVPAAVVGLALARAIAQYASGYLLQYVSNRILLDLRIQMFERMIHTGVSFFQRETASTVINAVVFEVNQVLSVLMGVTITLVRDSLTVVFLLGYLFYLNWRLTLIVAILLPCIGWLVGKINRRLRRLNREHQTLTNQLAYIVEETVGGYKVVKVHNGEPYEIGRFNELSRKLRGYSMRMTVSGGLAQPLTQFLASIALAVVLTIAVVQSANDQTTVGGFVAFVTAMLLIISPLKHLMDVNQPLQRGMTAAELIFGLIDEPREPEGGGKPLARASGAIEFSHVSFSYGMSRDGRQTLDDVSFTVAPGEMVALAGPSGSGKTTLVNLLPRFFDPSSGSVRVDGVALPEYSLRDLRNQIAMVSQDVVLFNDTIAANVAYGQAPERDRVEAALRAANLWETVTAMPDGIDTLVGDNGMRLSGGQRQRLAIARAIYKDAPILILDEATSALDSESERHVQAALETLMKGRTTLVIAHRLSTIERADRILVLEGGKIVESGSHRELLEQGGLYAHLHRIQFQQDAG</sequence>
<protein>
    <recommendedName>
        <fullName evidence="1">ATP-dependent lipid A-core flippase</fullName>
        <ecNumber evidence="1">7.5.2.6</ecNumber>
    </recommendedName>
    <alternativeName>
        <fullName evidence="1">Lipid A export ATP-binding/permease protein MsbA</fullName>
    </alternativeName>
</protein>
<name>MSBA_BURP1</name>
<dbReference type="EC" id="7.5.2.6" evidence="1"/>
<dbReference type="EMBL" id="CP000124">
    <property type="protein sequence ID" value="ABA47726.1"/>
    <property type="status" value="ALT_INIT"/>
    <property type="molecule type" value="Genomic_DNA"/>
</dbReference>
<dbReference type="RefSeq" id="WP_004186431.1">
    <property type="nucleotide sequence ID" value="NC_007434.1"/>
</dbReference>
<dbReference type="SMR" id="Q3JUI6"/>
<dbReference type="EnsemblBacteria" id="ABA47726">
    <property type="protein sequence ID" value="ABA47726"/>
    <property type="gene ID" value="BURPS1710b_1357"/>
</dbReference>
<dbReference type="GeneID" id="93059617"/>
<dbReference type="KEGG" id="bpm:BURPS1710b_1357"/>
<dbReference type="HOGENOM" id="CLU_000604_84_3_4"/>
<dbReference type="Proteomes" id="UP000002700">
    <property type="component" value="Chromosome I"/>
</dbReference>
<dbReference type="GO" id="GO:0005886">
    <property type="term" value="C:plasma membrane"/>
    <property type="evidence" value="ECO:0007669"/>
    <property type="project" value="UniProtKB-SubCell"/>
</dbReference>
<dbReference type="GO" id="GO:0015421">
    <property type="term" value="F:ABC-type oligopeptide transporter activity"/>
    <property type="evidence" value="ECO:0007669"/>
    <property type="project" value="TreeGrafter"/>
</dbReference>
<dbReference type="GO" id="GO:0005524">
    <property type="term" value="F:ATP binding"/>
    <property type="evidence" value="ECO:0007669"/>
    <property type="project" value="UniProtKB-KW"/>
</dbReference>
<dbReference type="GO" id="GO:0016887">
    <property type="term" value="F:ATP hydrolysis activity"/>
    <property type="evidence" value="ECO:0007669"/>
    <property type="project" value="InterPro"/>
</dbReference>
<dbReference type="GO" id="GO:0034040">
    <property type="term" value="F:ATPase-coupled lipid transmembrane transporter activity"/>
    <property type="evidence" value="ECO:0007669"/>
    <property type="project" value="InterPro"/>
</dbReference>
<dbReference type="CDD" id="cd18552">
    <property type="entry name" value="ABC_6TM_MsbA_like"/>
    <property type="match status" value="1"/>
</dbReference>
<dbReference type="FunFam" id="3.40.50.300:FF:000221">
    <property type="entry name" value="Multidrug ABC transporter ATP-binding protein"/>
    <property type="match status" value="1"/>
</dbReference>
<dbReference type="Gene3D" id="1.20.1560.10">
    <property type="entry name" value="ABC transporter type 1, transmembrane domain"/>
    <property type="match status" value="1"/>
</dbReference>
<dbReference type="Gene3D" id="3.40.50.300">
    <property type="entry name" value="P-loop containing nucleotide triphosphate hydrolases"/>
    <property type="match status" value="1"/>
</dbReference>
<dbReference type="InterPro" id="IPR003593">
    <property type="entry name" value="AAA+_ATPase"/>
</dbReference>
<dbReference type="InterPro" id="IPR011527">
    <property type="entry name" value="ABC1_TM_dom"/>
</dbReference>
<dbReference type="InterPro" id="IPR036640">
    <property type="entry name" value="ABC1_TM_sf"/>
</dbReference>
<dbReference type="InterPro" id="IPR003439">
    <property type="entry name" value="ABC_transporter-like_ATP-bd"/>
</dbReference>
<dbReference type="InterPro" id="IPR017871">
    <property type="entry name" value="ABC_transporter-like_CS"/>
</dbReference>
<dbReference type="InterPro" id="IPR011917">
    <property type="entry name" value="ABC_transpr_lipidA"/>
</dbReference>
<dbReference type="InterPro" id="IPR027417">
    <property type="entry name" value="P-loop_NTPase"/>
</dbReference>
<dbReference type="InterPro" id="IPR039421">
    <property type="entry name" value="Type_1_exporter"/>
</dbReference>
<dbReference type="NCBIfam" id="TIGR02203">
    <property type="entry name" value="MsbA_lipidA"/>
    <property type="match status" value="1"/>
</dbReference>
<dbReference type="PANTHER" id="PTHR43394:SF1">
    <property type="entry name" value="ATP-BINDING CASSETTE SUB-FAMILY B MEMBER 10, MITOCHONDRIAL"/>
    <property type="match status" value="1"/>
</dbReference>
<dbReference type="PANTHER" id="PTHR43394">
    <property type="entry name" value="ATP-DEPENDENT PERMEASE MDL1, MITOCHONDRIAL"/>
    <property type="match status" value="1"/>
</dbReference>
<dbReference type="Pfam" id="PF00664">
    <property type="entry name" value="ABC_membrane"/>
    <property type="match status" value="1"/>
</dbReference>
<dbReference type="Pfam" id="PF00005">
    <property type="entry name" value="ABC_tran"/>
    <property type="match status" value="1"/>
</dbReference>
<dbReference type="SMART" id="SM00382">
    <property type="entry name" value="AAA"/>
    <property type="match status" value="1"/>
</dbReference>
<dbReference type="SUPFAM" id="SSF90123">
    <property type="entry name" value="ABC transporter transmembrane region"/>
    <property type="match status" value="1"/>
</dbReference>
<dbReference type="SUPFAM" id="SSF52540">
    <property type="entry name" value="P-loop containing nucleoside triphosphate hydrolases"/>
    <property type="match status" value="1"/>
</dbReference>
<dbReference type="PROSITE" id="PS50929">
    <property type="entry name" value="ABC_TM1F"/>
    <property type="match status" value="1"/>
</dbReference>
<dbReference type="PROSITE" id="PS00211">
    <property type="entry name" value="ABC_TRANSPORTER_1"/>
    <property type="match status" value="1"/>
</dbReference>
<dbReference type="PROSITE" id="PS50893">
    <property type="entry name" value="ABC_TRANSPORTER_2"/>
    <property type="match status" value="1"/>
</dbReference>
<dbReference type="PROSITE" id="PS51239">
    <property type="entry name" value="MSBA"/>
    <property type="match status" value="1"/>
</dbReference>
<comment type="function">
    <text evidence="1">Involved in lipopolysaccharide (LPS) biosynthesis. Translocates lipid A-core from the inner to the outer leaflet of the inner membrane. Transmembrane domains (TMD) form a pore in the inner membrane and the ATP-binding domain (NBD) is responsible for energy generation.</text>
</comment>
<comment type="catalytic activity">
    <reaction evidence="1">
        <text>ATP + H2O + lipid A-core oligosaccharideSide 1 = ADP + phosphate + lipid A-core oligosaccharideSide 2.</text>
        <dbReference type="EC" id="7.5.2.6"/>
    </reaction>
</comment>
<comment type="subunit">
    <text evidence="1">Homodimer.</text>
</comment>
<comment type="subcellular location">
    <subcellularLocation>
        <location evidence="1">Cell inner membrane</location>
        <topology evidence="1">Multi-pass membrane protein</topology>
    </subcellularLocation>
</comment>
<comment type="domain">
    <text evidence="1">In MsbA the ATP-binding domain (NBD) and the transmembrane domain (TMD) are fused.</text>
</comment>
<comment type="similarity">
    <text evidence="1">Belongs to the ABC transporter superfamily. Lipid exporter (TC 3.A.1.106) family.</text>
</comment>
<comment type="sequence caution" evidence="2">
    <conflict type="erroneous initiation">
        <sequence resource="EMBL-CDS" id="ABA47726"/>
    </conflict>
</comment>
<reference key="1">
    <citation type="journal article" date="2010" name="Genome Biol. Evol.">
        <title>Continuing evolution of Burkholderia mallei through genome reduction and large-scale rearrangements.</title>
        <authorList>
            <person name="Losada L."/>
            <person name="Ronning C.M."/>
            <person name="DeShazer D."/>
            <person name="Woods D."/>
            <person name="Fedorova N."/>
            <person name="Kim H.S."/>
            <person name="Shabalina S.A."/>
            <person name="Pearson T.R."/>
            <person name="Brinkac L."/>
            <person name="Tan P."/>
            <person name="Nandi T."/>
            <person name="Crabtree J."/>
            <person name="Badger J."/>
            <person name="Beckstrom-Sternberg S."/>
            <person name="Saqib M."/>
            <person name="Schutzer S.E."/>
            <person name="Keim P."/>
            <person name="Nierman W.C."/>
        </authorList>
    </citation>
    <scope>NUCLEOTIDE SEQUENCE [LARGE SCALE GENOMIC DNA]</scope>
    <source>
        <strain>1710b</strain>
    </source>
</reference>
<evidence type="ECO:0000255" key="1">
    <source>
        <dbReference type="HAMAP-Rule" id="MF_01703"/>
    </source>
</evidence>
<evidence type="ECO:0000305" key="2"/>
<accession>Q3JUI6</accession>